<protein>
    <recommendedName>
        <fullName>Cytochrome P450 705A5</fullName>
        <ecNumber>1.14.-.-</ecNumber>
    </recommendedName>
    <alternativeName>
        <fullName>Thalian-diol desaturase</fullName>
        <shortName>AtTHAD</shortName>
    </alternativeName>
</protein>
<comment type="function">
    <text evidence="3">Converts thalian-diol to a desaturated thalian-diol.</text>
</comment>
<comment type="cofactor">
    <cofactor evidence="1">
        <name>heme</name>
        <dbReference type="ChEBI" id="CHEBI:30413"/>
    </cofactor>
</comment>
<comment type="subcellular location">
    <subcellularLocation>
        <location evidence="4">Membrane</location>
        <topology evidence="4">Single-pass membrane protein</topology>
    </subcellularLocation>
</comment>
<comment type="tissue specificity">
    <text evidence="3">Expressed primarily in the root epidermis.</text>
</comment>
<comment type="disruption phenotype">
    <text evidence="3">Increased levels of thalian-diol in roots.</text>
</comment>
<comment type="miscellaneous">
    <text>Constitutes with three contiguous genes an operon-like gene cluster that is involved in the thalianol pathway.</text>
</comment>
<comment type="similarity">
    <text evidence="4">Belongs to the cytochrome P450 family.</text>
</comment>
<dbReference type="EC" id="1.14.-.-"/>
<dbReference type="EMBL" id="AB017064">
    <property type="protein sequence ID" value="BAB11063.1"/>
    <property type="molecule type" value="Genomic_DNA"/>
</dbReference>
<dbReference type="EMBL" id="CP002688">
    <property type="protein sequence ID" value="AED95603.1"/>
    <property type="molecule type" value="Genomic_DNA"/>
</dbReference>
<dbReference type="RefSeq" id="NP_199610.1">
    <property type="nucleotide sequence ID" value="NM_124173.3"/>
</dbReference>
<dbReference type="SMR" id="Q9FI39"/>
<dbReference type="BioGRID" id="20098">
    <property type="interactions" value="4"/>
</dbReference>
<dbReference type="FunCoup" id="Q9FI39">
    <property type="interactions" value="223"/>
</dbReference>
<dbReference type="STRING" id="3702.Q9FI39"/>
<dbReference type="iPTMnet" id="Q9FI39"/>
<dbReference type="PaxDb" id="3702-AT5G47990.1"/>
<dbReference type="ProteomicsDB" id="234215"/>
<dbReference type="EnsemblPlants" id="AT5G47990.1">
    <property type="protein sequence ID" value="AT5G47990.1"/>
    <property type="gene ID" value="AT5G47990"/>
</dbReference>
<dbReference type="GeneID" id="834850"/>
<dbReference type="Gramene" id="AT5G47990.1">
    <property type="protein sequence ID" value="AT5G47990.1"/>
    <property type="gene ID" value="AT5G47990"/>
</dbReference>
<dbReference type="KEGG" id="ath:AT5G47990"/>
<dbReference type="Araport" id="AT5G47990"/>
<dbReference type="TAIR" id="AT5G47990">
    <property type="gene designation" value="CYP705A5"/>
</dbReference>
<dbReference type="eggNOG" id="KOG0156">
    <property type="taxonomic scope" value="Eukaryota"/>
</dbReference>
<dbReference type="HOGENOM" id="CLU_001570_4_0_1"/>
<dbReference type="InParanoid" id="Q9FI39"/>
<dbReference type="OMA" id="ANTIQWT"/>
<dbReference type="PhylomeDB" id="Q9FI39"/>
<dbReference type="BioCyc" id="MetaCyc:AT5G47990-MONOMER"/>
<dbReference type="PRO" id="PR:Q9FI39"/>
<dbReference type="Proteomes" id="UP000006548">
    <property type="component" value="Chromosome 5"/>
</dbReference>
<dbReference type="ExpressionAtlas" id="Q9FI39">
    <property type="expression patterns" value="baseline and differential"/>
</dbReference>
<dbReference type="GO" id="GO:0005783">
    <property type="term" value="C:endoplasmic reticulum"/>
    <property type="evidence" value="ECO:0007005"/>
    <property type="project" value="TAIR"/>
</dbReference>
<dbReference type="GO" id="GO:0016020">
    <property type="term" value="C:membrane"/>
    <property type="evidence" value="ECO:0007669"/>
    <property type="project" value="UniProtKB-SubCell"/>
</dbReference>
<dbReference type="GO" id="GO:0020037">
    <property type="term" value="F:heme binding"/>
    <property type="evidence" value="ECO:0007669"/>
    <property type="project" value="InterPro"/>
</dbReference>
<dbReference type="GO" id="GO:0005506">
    <property type="term" value="F:iron ion binding"/>
    <property type="evidence" value="ECO:0007669"/>
    <property type="project" value="InterPro"/>
</dbReference>
<dbReference type="GO" id="GO:0004497">
    <property type="term" value="F:monooxygenase activity"/>
    <property type="evidence" value="ECO:0007669"/>
    <property type="project" value="UniProtKB-KW"/>
</dbReference>
<dbReference type="GO" id="GO:0080004">
    <property type="term" value="F:thalian-diol desaturase activity"/>
    <property type="evidence" value="ECO:0000315"/>
    <property type="project" value="TAIR"/>
</dbReference>
<dbReference type="GO" id="GO:0051554">
    <property type="term" value="P:flavonol metabolic process"/>
    <property type="evidence" value="ECO:0000315"/>
    <property type="project" value="TAIR"/>
</dbReference>
<dbReference type="GO" id="GO:0009958">
    <property type="term" value="P:positive gravitropism"/>
    <property type="evidence" value="ECO:0000315"/>
    <property type="project" value="TAIR"/>
</dbReference>
<dbReference type="GO" id="GO:0048364">
    <property type="term" value="P:root development"/>
    <property type="evidence" value="ECO:0000315"/>
    <property type="project" value="TAIR"/>
</dbReference>
<dbReference type="GO" id="GO:0080003">
    <property type="term" value="P:thalianol metabolic process"/>
    <property type="evidence" value="ECO:0000315"/>
    <property type="project" value="TAIR"/>
</dbReference>
<dbReference type="CDD" id="cd20655">
    <property type="entry name" value="CYP93"/>
    <property type="match status" value="1"/>
</dbReference>
<dbReference type="FunFam" id="1.10.630.10:FF:000019">
    <property type="entry name" value="Cytochrome P450 family protein"/>
    <property type="match status" value="1"/>
</dbReference>
<dbReference type="Gene3D" id="1.10.630.10">
    <property type="entry name" value="Cytochrome P450"/>
    <property type="match status" value="1"/>
</dbReference>
<dbReference type="InterPro" id="IPR001128">
    <property type="entry name" value="Cyt_P450"/>
</dbReference>
<dbReference type="InterPro" id="IPR017972">
    <property type="entry name" value="Cyt_P450_CS"/>
</dbReference>
<dbReference type="InterPro" id="IPR002401">
    <property type="entry name" value="Cyt_P450_E_grp-I"/>
</dbReference>
<dbReference type="InterPro" id="IPR036396">
    <property type="entry name" value="Cyt_P450_sf"/>
</dbReference>
<dbReference type="InterPro" id="IPR051103">
    <property type="entry name" value="Plant_metabolite_P450s"/>
</dbReference>
<dbReference type="PANTHER" id="PTHR24298:SF475">
    <property type="entry name" value="CYTOCHROME P450 705A5-RELATED"/>
    <property type="match status" value="1"/>
</dbReference>
<dbReference type="PANTHER" id="PTHR24298">
    <property type="entry name" value="FLAVONOID 3'-MONOOXYGENASE-RELATED"/>
    <property type="match status" value="1"/>
</dbReference>
<dbReference type="Pfam" id="PF00067">
    <property type="entry name" value="p450"/>
    <property type="match status" value="1"/>
</dbReference>
<dbReference type="PRINTS" id="PR00463">
    <property type="entry name" value="EP450I"/>
</dbReference>
<dbReference type="PRINTS" id="PR00385">
    <property type="entry name" value="P450"/>
</dbReference>
<dbReference type="SUPFAM" id="SSF48264">
    <property type="entry name" value="Cytochrome P450"/>
    <property type="match status" value="1"/>
</dbReference>
<dbReference type="PROSITE" id="PS00086">
    <property type="entry name" value="CYTOCHROME_P450"/>
    <property type="match status" value="1"/>
</dbReference>
<reference key="1">
    <citation type="journal article" date="1999" name="DNA Res.">
        <title>Structural analysis of Arabidopsis thaliana chromosome 5. IX. Sequence features of the regions of 1,011,550 bp covered by seventeen P1 and TAC clones.</title>
        <authorList>
            <person name="Kaneko T."/>
            <person name="Katoh T."/>
            <person name="Sato S."/>
            <person name="Nakamura Y."/>
            <person name="Asamizu E."/>
            <person name="Kotani H."/>
            <person name="Miyajima N."/>
            <person name="Tabata S."/>
        </authorList>
    </citation>
    <scope>NUCLEOTIDE SEQUENCE [LARGE SCALE GENOMIC DNA]</scope>
    <source>
        <strain>cv. Columbia</strain>
    </source>
</reference>
<reference key="2">
    <citation type="journal article" date="2017" name="Plant J.">
        <title>Araport11: a complete reannotation of the Arabidopsis thaliana reference genome.</title>
        <authorList>
            <person name="Cheng C.Y."/>
            <person name="Krishnakumar V."/>
            <person name="Chan A.P."/>
            <person name="Thibaud-Nissen F."/>
            <person name="Schobel S."/>
            <person name="Town C.D."/>
        </authorList>
    </citation>
    <scope>GENOME REANNOTATION</scope>
    <source>
        <strain>cv. Columbia</strain>
    </source>
</reference>
<reference key="3">
    <citation type="journal article" date="2008" name="Science">
        <title>Metabolic diversification -- independent assembly of operon-like gene clusters in different plants.</title>
        <authorList>
            <person name="Field B."/>
            <person name="Osbourn A.E."/>
        </authorList>
    </citation>
    <scope>FUNCTION</scope>
    <scope>TISSUE SPECIFICITY</scope>
    <scope>DISRUPTION PHENOTYPE</scope>
</reference>
<sequence>MASMITVDFENCFIFLLLCLFSRLSYDLFFRKTKDSRAGCALPPSPPSLPIIGHLHLILFVPIHQSFKNISSKYGPLLHLRFFNFPIVLVSSASTAYEIFKAQDVNVSSRPPPPIEESLILGSSSFINTPYGDYSKFMKKFMVQKLLGPQALQRSRNIRADELERFYKTLLDKAMKKQTVEIRNEAMKLTNNTICKMIMGRSCSEENGEAETVRGLVTESIFLTKKHFLGAMFHKPLKKLGISLFAKELMNVSNRFDELLEKILVEHEEKLQEHHQTSDMLDMLLEAYGDENAEYKITRDQIKSLFVDLFSAGTEASANTIQWTMAEIIKNPKICERLREEIDSVVGKTRLVQETDLPNLPYLQAIVKEGLRLHPPGPVVRTFKETCEIKGFYIPEKTRLFVNVYAIMRDPDFWEDPEEFKPERFLASSRLGEEDEKREDMLKYIPFGSGRRACPGSHLAYTVVGSVIGMMVQHFDWIIKGEKINMKEGGTMTLTMAHPLKCTPVPRNLNT</sequence>
<feature type="chain" id="PRO_0000366942" description="Cytochrome P450 705A5">
    <location>
        <begin position="1"/>
        <end position="511"/>
    </location>
</feature>
<feature type="transmembrane region" description="Helical" evidence="2">
    <location>
        <begin position="12"/>
        <end position="30"/>
    </location>
</feature>
<feature type="binding site" description="axial binding residue" evidence="1">
    <location>
        <position position="454"/>
    </location>
    <ligand>
        <name>heme</name>
        <dbReference type="ChEBI" id="CHEBI:30413"/>
    </ligand>
    <ligandPart>
        <name>Fe</name>
        <dbReference type="ChEBI" id="CHEBI:18248"/>
    </ligandPart>
</feature>
<proteinExistence type="evidence at transcript level"/>
<name>THAD_ARATH</name>
<organism>
    <name type="scientific">Arabidopsis thaliana</name>
    <name type="common">Mouse-ear cress</name>
    <dbReference type="NCBI Taxonomy" id="3702"/>
    <lineage>
        <taxon>Eukaryota</taxon>
        <taxon>Viridiplantae</taxon>
        <taxon>Streptophyta</taxon>
        <taxon>Embryophyta</taxon>
        <taxon>Tracheophyta</taxon>
        <taxon>Spermatophyta</taxon>
        <taxon>Magnoliopsida</taxon>
        <taxon>eudicotyledons</taxon>
        <taxon>Gunneridae</taxon>
        <taxon>Pentapetalae</taxon>
        <taxon>rosids</taxon>
        <taxon>malvids</taxon>
        <taxon>Brassicales</taxon>
        <taxon>Brassicaceae</taxon>
        <taxon>Camelineae</taxon>
        <taxon>Arabidopsis</taxon>
    </lineage>
</organism>
<gene>
    <name type="primary">CYP705A5</name>
    <name type="synonym">THAD</name>
    <name type="ordered locus">At5g47990</name>
    <name type="ORF">MDN11.4</name>
</gene>
<evidence type="ECO:0000250" key="1"/>
<evidence type="ECO:0000255" key="2"/>
<evidence type="ECO:0000269" key="3">
    <source>
    </source>
</evidence>
<evidence type="ECO:0000305" key="4"/>
<keyword id="KW-0349">Heme</keyword>
<keyword id="KW-0408">Iron</keyword>
<keyword id="KW-0472">Membrane</keyword>
<keyword id="KW-0479">Metal-binding</keyword>
<keyword id="KW-0503">Monooxygenase</keyword>
<keyword id="KW-0560">Oxidoreductase</keyword>
<keyword id="KW-1185">Reference proteome</keyword>
<keyword id="KW-0812">Transmembrane</keyword>
<keyword id="KW-1133">Transmembrane helix</keyword>
<accession>Q9FI39</accession>